<protein>
    <recommendedName>
        <fullName>Uncharacterized glycosylase YvbX</fullName>
        <ecNumber>3.2.-.-</ecNumber>
    </recommendedName>
</protein>
<evidence type="ECO:0000255" key="1"/>
<evidence type="ECO:0000255" key="2">
    <source>
        <dbReference type="PROSITE-ProRule" id="PRU01258"/>
    </source>
</evidence>
<evidence type="ECO:0000305" key="3"/>
<keyword id="KW-0326">Glycosidase</keyword>
<keyword id="KW-0378">Hydrolase</keyword>
<keyword id="KW-1185">Reference proteome</keyword>
<keyword id="KW-0732">Signal</keyword>
<organism>
    <name type="scientific">Bacillus subtilis (strain 168)</name>
    <dbReference type="NCBI Taxonomy" id="224308"/>
    <lineage>
        <taxon>Bacteria</taxon>
        <taxon>Bacillati</taxon>
        <taxon>Bacillota</taxon>
        <taxon>Bacilli</taxon>
        <taxon>Bacillales</taxon>
        <taxon>Bacillaceae</taxon>
        <taxon>Bacillus</taxon>
    </lineage>
</organism>
<sequence>MKKWLIIAVSLAIAIVLFMYTKGEAKAAGMTVGYTTGDTASYNSLTKYHTYMNAIATDTFAFEKNGQIIGDAPTKQLTYAKKKKIKTWAVISNYNDAIYDFDGDLASRVMSNKTAKKRFTDQLITLAKKHSYYGINIDFEAVNPEDRAAYSNFIQYVSQALNKKHIKTMVSVPAKSADDKNDDWSWPYDYAKIGKYADFVQVMTYDEHGIWGEPGSVASTNWIKSSLQFSVKKIKANKVIMGIPAYGYDWDVKDGSTSTIREWNELKSLIKKQKAKPAFNKKSGSMTFSYVDKKKHKHVVWYENEKTVQTKSHLAKQYKIAGVSVYALGNESESFWKAIRKGTK</sequence>
<name>YVBX_BACSU</name>
<reference key="1">
    <citation type="journal article" date="1997" name="Nature">
        <title>The complete genome sequence of the Gram-positive bacterium Bacillus subtilis.</title>
        <authorList>
            <person name="Kunst F."/>
            <person name="Ogasawara N."/>
            <person name="Moszer I."/>
            <person name="Albertini A.M."/>
            <person name="Alloni G."/>
            <person name="Azevedo V."/>
            <person name="Bertero M.G."/>
            <person name="Bessieres P."/>
            <person name="Bolotin A."/>
            <person name="Borchert S."/>
            <person name="Borriss R."/>
            <person name="Boursier L."/>
            <person name="Brans A."/>
            <person name="Braun M."/>
            <person name="Brignell S.C."/>
            <person name="Bron S."/>
            <person name="Brouillet S."/>
            <person name="Bruschi C.V."/>
            <person name="Caldwell B."/>
            <person name="Capuano V."/>
            <person name="Carter N.M."/>
            <person name="Choi S.-K."/>
            <person name="Codani J.-J."/>
            <person name="Connerton I.F."/>
            <person name="Cummings N.J."/>
            <person name="Daniel R.A."/>
            <person name="Denizot F."/>
            <person name="Devine K.M."/>
            <person name="Duesterhoeft A."/>
            <person name="Ehrlich S.D."/>
            <person name="Emmerson P.T."/>
            <person name="Entian K.-D."/>
            <person name="Errington J."/>
            <person name="Fabret C."/>
            <person name="Ferrari E."/>
            <person name="Foulger D."/>
            <person name="Fritz C."/>
            <person name="Fujita M."/>
            <person name="Fujita Y."/>
            <person name="Fuma S."/>
            <person name="Galizzi A."/>
            <person name="Galleron N."/>
            <person name="Ghim S.-Y."/>
            <person name="Glaser P."/>
            <person name="Goffeau A."/>
            <person name="Golightly E.J."/>
            <person name="Grandi G."/>
            <person name="Guiseppi G."/>
            <person name="Guy B.J."/>
            <person name="Haga K."/>
            <person name="Haiech J."/>
            <person name="Harwood C.R."/>
            <person name="Henaut A."/>
            <person name="Hilbert H."/>
            <person name="Holsappel S."/>
            <person name="Hosono S."/>
            <person name="Hullo M.-F."/>
            <person name="Itaya M."/>
            <person name="Jones L.-M."/>
            <person name="Joris B."/>
            <person name="Karamata D."/>
            <person name="Kasahara Y."/>
            <person name="Klaerr-Blanchard M."/>
            <person name="Klein C."/>
            <person name="Kobayashi Y."/>
            <person name="Koetter P."/>
            <person name="Koningstein G."/>
            <person name="Krogh S."/>
            <person name="Kumano M."/>
            <person name="Kurita K."/>
            <person name="Lapidus A."/>
            <person name="Lardinois S."/>
            <person name="Lauber J."/>
            <person name="Lazarevic V."/>
            <person name="Lee S.-M."/>
            <person name="Levine A."/>
            <person name="Liu H."/>
            <person name="Masuda S."/>
            <person name="Mauel C."/>
            <person name="Medigue C."/>
            <person name="Medina N."/>
            <person name="Mellado R.P."/>
            <person name="Mizuno M."/>
            <person name="Moestl D."/>
            <person name="Nakai S."/>
            <person name="Noback M."/>
            <person name="Noone D."/>
            <person name="O'Reilly M."/>
            <person name="Ogawa K."/>
            <person name="Ogiwara A."/>
            <person name="Oudega B."/>
            <person name="Park S.-H."/>
            <person name="Parro V."/>
            <person name="Pohl T.M."/>
            <person name="Portetelle D."/>
            <person name="Porwollik S."/>
            <person name="Prescott A.M."/>
            <person name="Presecan E."/>
            <person name="Pujic P."/>
            <person name="Purnelle B."/>
            <person name="Rapoport G."/>
            <person name="Rey M."/>
            <person name="Reynolds S."/>
            <person name="Rieger M."/>
            <person name="Rivolta C."/>
            <person name="Rocha E."/>
            <person name="Roche B."/>
            <person name="Rose M."/>
            <person name="Sadaie Y."/>
            <person name="Sato T."/>
            <person name="Scanlan E."/>
            <person name="Schleich S."/>
            <person name="Schroeter R."/>
            <person name="Scoffone F."/>
            <person name="Sekiguchi J."/>
            <person name="Sekowska A."/>
            <person name="Seror S.J."/>
            <person name="Serror P."/>
            <person name="Shin B.-S."/>
            <person name="Soldo B."/>
            <person name="Sorokin A."/>
            <person name="Tacconi E."/>
            <person name="Takagi T."/>
            <person name="Takahashi H."/>
            <person name="Takemaru K."/>
            <person name="Takeuchi M."/>
            <person name="Tamakoshi A."/>
            <person name="Tanaka T."/>
            <person name="Terpstra P."/>
            <person name="Tognoni A."/>
            <person name="Tosato V."/>
            <person name="Uchiyama S."/>
            <person name="Vandenbol M."/>
            <person name="Vannier F."/>
            <person name="Vassarotti A."/>
            <person name="Viari A."/>
            <person name="Wambutt R."/>
            <person name="Wedler E."/>
            <person name="Wedler H."/>
            <person name="Weitzenegger T."/>
            <person name="Winters P."/>
            <person name="Wipat A."/>
            <person name="Yamamoto H."/>
            <person name="Yamane K."/>
            <person name="Yasumoto K."/>
            <person name="Yata K."/>
            <person name="Yoshida K."/>
            <person name="Yoshikawa H.-F."/>
            <person name="Zumstein E."/>
            <person name="Yoshikawa H."/>
            <person name="Danchin A."/>
        </authorList>
    </citation>
    <scope>NUCLEOTIDE SEQUENCE [LARGE SCALE GENOMIC DNA]</scope>
    <source>
        <strain>168</strain>
    </source>
</reference>
<gene>
    <name type="primary">yvbX</name>
    <name type="ordered locus">BSU34020</name>
</gene>
<accession>O32258</accession>
<proteinExistence type="inferred from homology"/>
<feature type="signal peptide" evidence="1">
    <location>
        <begin position="1"/>
        <end position="27"/>
    </location>
</feature>
<feature type="chain" id="PRO_0000378079" description="Uncharacterized glycosylase YvbX">
    <location>
        <begin position="28"/>
        <end position="344"/>
    </location>
</feature>
<feature type="domain" description="GH18" evidence="2">
    <location>
        <begin position="29"/>
        <end position="344"/>
    </location>
</feature>
<feature type="active site" description="Proton donor" evidence="2">
    <location>
        <position position="140"/>
    </location>
</feature>
<dbReference type="EC" id="3.2.-.-"/>
<dbReference type="EMBL" id="AL009126">
    <property type="protein sequence ID" value="CAB15407.1"/>
    <property type="molecule type" value="Genomic_DNA"/>
</dbReference>
<dbReference type="PIR" id="H70030">
    <property type="entry name" value="H70030"/>
</dbReference>
<dbReference type="RefSeq" id="NP_391282.1">
    <property type="nucleotide sequence ID" value="NC_000964.3"/>
</dbReference>
<dbReference type="RefSeq" id="WP_003228311.1">
    <property type="nucleotide sequence ID" value="NZ_OZ025638.1"/>
</dbReference>
<dbReference type="SMR" id="O32258"/>
<dbReference type="FunCoup" id="O32258">
    <property type="interactions" value="188"/>
</dbReference>
<dbReference type="STRING" id="224308.BSU34020"/>
<dbReference type="CAZy" id="GH18">
    <property type="family name" value="Glycoside Hydrolase Family 18"/>
</dbReference>
<dbReference type="PaxDb" id="224308-BSU34020"/>
<dbReference type="EnsemblBacteria" id="CAB15407">
    <property type="protein sequence ID" value="CAB15407"/>
    <property type="gene ID" value="BSU_34020"/>
</dbReference>
<dbReference type="GeneID" id="937709"/>
<dbReference type="KEGG" id="bsu:BSU34020"/>
<dbReference type="PATRIC" id="fig|224308.179.peg.3688"/>
<dbReference type="eggNOG" id="COG3858">
    <property type="taxonomic scope" value="Bacteria"/>
</dbReference>
<dbReference type="InParanoid" id="O32258"/>
<dbReference type="OrthoDB" id="9775889at2"/>
<dbReference type="PhylomeDB" id="O32258"/>
<dbReference type="BioCyc" id="BSUB:BSU34020-MONOMER"/>
<dbReference type="Proteomes" id="UP000001570">
    <property type="component" value="Chromosome"/>
</dbReference>
<dbReference type="GO" id="GO:0008061">
    <property type="term" value="F:chitin binding"/>
    <property type="evidence" value="ECO:0007669"/>
    <property type="project" value="InterPro"/>
</dbReference>
<dbReference type="GO" id="GO:0016798">
    <property type="term" value="F:hydrolase activity, acting on glycosyl bonds"/>
    <property type="evidence" value="ECO:0007669"/>
    <property type="project" value="UniProtKB-KW"/>
</dbReference>
<dbReference type="GO" id="GO:0005975">
    <property type="term" value="P:carbohydrate metabolic process"/>
    <property type="evidence" value="ECO:0007669"/>
    <property type="project" value="InterPro"/>
</dbReference>
<dbReference type="CDD" id="cd02874">
    <property type="entry name" value="GH18_CFLE_spore_hydrolase"/>
    <property type="match status" value="1"/>
</dbReference>
<dbReference type="Gene3D" id="3.10.50.10">
    <property type="match status" value="1"/>
</dbReference>
<dbReference type="Gene3D" id="3.20.20.80">
    <property type="entry name" value="Glycosidases"/>
    <property type="match status" value="1"/>
</dbReference>
<dbReference type="InterPro" id="IPR041704">
    <property type="entry name" value="CFLE_GH18"/>
</dbReference>
<dbReference type="InterPro" id="IPR011583">
    <property type="entry name" value="Chitinase_II/V-like_cat"/>
</dbReference>
<dbReference type="InterPro" id="IPR029070">
    <property type="entry name" value="Chitinase_insertion_sf"/>
</dbReference>
<dbReference type="InterPro" id="IPR001223">
    <property type="entry name" value="Glyco_hydro18_cat"/>
</dbReference>
<dbReference type="InterPro" id="IPR017853">
    <property type="entry name" value="Glycoside_hydrolase_SF"/>
</dbReference>
<dbReference type="PANTHER" id="PTHR46066:SF2">
    <property type="entry name" value="CHITINASE DOMAIN-CONTAINING PROTEIN 1"/>
    <property type="match status" value="1"/>
</dbReference>
<dbReference type="PANTHER" id="PTHR46066">
    <property type="entry name" value="CHITINASE DOMAIN-CONTAINING PROTEIN 1 FAMILY MEMBER"/>
    <property type="match status" value="1"/>
</dbReference>
<dbReference type="Pfam" id="PF00704">
    <property type="entry name" value="Glyco_hydro_18"/>
    <property type="match status" value="1"/>
</dbReference>
<dbReference type="SMART" id="SM00636">
    <property type="entry name" value="Glyco_18"/>
    <property type="match status" value="1"/>
</dbReference>
<dbReference type="SUPFAM" id="SSF51445">
    <property type="entry name" value="(Trans)glycosidases"/>
    <property type="match status" value="1"/>
</dbReference>
<dbReference type="PROSITE" id="PS51910">
    <property type="entry name" value="GH18_2"/>
    <property type="match status" value="1"/>
</dbReference>
<comment type="similarity">
    <text evidence="3">Belongs to the glycosyl hydrolase 18 family.</text>
</comment>